<dbReference type="EMBL" id="CP001283">
    <property type="protein sequence ID" value="ACK90407.1"/>
    <property type="molecule type" value="Genomic_DNA"/>
</dbReference>
<dbReference type="RefSeq" id="WP_000164606.1">
    <property type="nucleotide sequence ID" value="NC_011773.1"/>
</dbReference>
<dbReference type="SMR" id="B7JSD8"/>
<dbReference type="KEGG" id="bcu:BCAH820_0955"/>
<dbReference type="HOGENOM" id="CLU_140243_3_0_9"/>
<dbReference type="Proteomes" id="UP000001363">
    <property type="component" value="Chromosome"/>
</dbReference>
<dbReference type="Gene3D" id="1.20.1500.10">
    <property type="entry name" value="YheA/YmcA-like"/>
    <property type="match status" value="1"/>
</dbReference>
<dbReference type="HAMAP" id="MF_01526">
    <property type="entry name" value="UPF0342"/>
    <property type="match status" value="1"/>
</dbReference>
<dbReference type="InterPro" id="IPR010368">
    <property type="entry name" value="Com_YlbF"/>
</dbReference>
<dbReference type="InterPro" id="IPR023378">
    <property type="entry name" value="YheA/YmcA-like_dom_sf"/>
</dbReference>
<dbReference type="NCBIfam" id="NF010211">
    <property type="entry name" value="PRK13676.1-4"/>
    <property type="match status" value="1"/>
</dbReference>
<dbReference type="Pfam" id="PF06133">
    <property type="entry name" value="Com_YlbF"/>
    <property type="match status" value="1"/>
</dbReference>
<dbReference type="SUPFAM" id="SSF158622">
    <property type="entry name" value="YheA/YmcA-like"/>
    <property type="match status" value="1"/>
</dbReference>
<organism>
    <name type="scientific">Bacillus cereus (strain AH820)</name>
    <dbReference type="NCBI Taxonomy" id="405535"/>
    <lineage>
        <taxon>Bacteria</taxon>
        <taxon>Bacillati</taxon>
        <taxon>Bacillota</taxon>
        <taxon>Bacilli</taxon>
        <taxon>Bacillales</taxon>
        <taxon>Bacillaceae</taxon>
        <taxon>Bacillus</taxon>
        <taxon>Bacillus cereus group</taxon>
    </lineage>
</organism>
<proteinExistence type="inferred from homology"/>
<comment type="similarity">
    <text evidence="1">Belongs to the UPF0342 family.</text>
</comment>
<reference key="1">
    <citation type="submission" date="2008-10" db="EMBL/GenBank/DDBJ databases">
        <title>Genome sequence of Bacillus cereus AH820.</title>
        <authorList>
            <person name="Dodson R.J."/>
            <person name="Durkin A.S."/>
            <person name="Rosovitz M.J."/>
            <person name="Rasko D.A."/>
            <person name="Hoffmaster A."/>
            <person name="Ravel J."/>
            <person name="Sutton G."/>
        </authorList>
    </citation>
    <scope>NUCLEOTIDE SEQUENCE [LARGE SCALE GENOMIC DNA]</scope>
    <source>
        <strain>AH820</strain>
    </source>
</reference>
<accession>B7JSD8</accession>
<name>Y955_BACC0</name>
<evidence type="ECO:0000255" key="1">
    <source>
        <dbReference type="HAMAP-Rule" id="MF_01526"/>
    </source>
</evidence>
<sequence>MTKNIHDVAYELQKAIAENDDFKTLKESYAAVQADAASKNLFDEFRTMQLSLQQKMMQGQEITEEDNQQAQEVVVRIQQDAKITKLMETEQRLNVVIGDVNKIIMKPLEELYSAQQQA</sequence>
<gene>
    <name type="ordered locus">BCAH820_0955</name>
</gene>
<protein>
    <recommendedName>
        <fullName evidence="1">UPF0342 protein BCAH820_0955</fullName>
    </recommendedName>
</protein>
<feature type="chain" id="PRO_1000198519" description="UPF0342 protein BCAH820_0955">
    <location>
        <begin position="1"/>
        <end position="118"/>
    </location>
</feature>